<reference key="1">
    <citation type="journal article" date="2002" name="Nat. Genet.">
        <title>Adaptive evolution of a duplicated pancreatic ribonuclease gene in a leaf-eating monkey.</title>
        <authorList>
            <person name="Zhang J."/>
            <person name="Zhang Y.-P."/>
            <person name="Rosenberg H.F."/>
        </authorList>
    </citation>
    <scope>NUCLEOTIDE SEQUENCE [GENOMIC DNA]</scope>
</reference>
<proteinExistence type="inferred from homology"/>
<name>RNAS1_SAISC</name>
<organism>
    <name type="scientific">Saimiri sciureus</name>
    <name type="common">Common squirrel monkey</name>
    <dbReference type="NCBI Taxonomy" id="9521"/>
    <lineage>
        <taxon>Eukaryota</taxon>
        <taxon>Metazoa</taxon>
        <taxon>Chordata</taxon>
        <taxon>Craniata</taxon>
        <taxon>Vertebrata</taxon>
        <taxon>Euteleostomi</taxon>
        <taxon>Mammalia</taxon>
        <taxon>Eutheria</taxon>
        <taxon>Euarchontoglires</taxon>
        <taxon>Primates</taxon>
        <taxon>Haplorrhini</taxon>
        <taxon>Platyrrhini</taxon>
        <taxon>Cebidae</taxon>
        <taxon>Saimiriinae</taxon>
        <taxon>Saimiri</taxon>
    </lineage>
</organism>
<evidence type="ECO:0000250" key="1"/>
<evidence type="ECO:0000255" key="2"/>
<evidence type="ECO:0000256" key="3">
    <source>
        <dbReference type="SAM" id="MobiDB-lite"/>
    </source>
</evidence>
<evidence type="ECO:0000305" key="4"/>
<keyword id="KW-1015">Disulfide bond</keyword>
<keyword id="KW-0255">Endonuclease</keyword>
<keyword id="KW-0325">Glycoprotein</keyword>
<keyword id="KW-0378">Hydrolase</keyword>
<keyword id="KW-0456">Lyase</keyword>
<keyword id="KW-0540">Nuclease</keyword>
<keyword id="KW-0964">Secreted</keyword>
<keyword id="KW-0732">Signal</keyword>
<comment type="function">
    <text evidence="1">Endonuclease that catalyzes the cleavage of RNA on the 3' side of pyrimidine nucleotides. Acts on single-stranded and double-stranded RNA (By similarity).</text>
</comment>
<comment type="catalytic activity">
    <reaction>
        <text>an [RNA] containing cytidine + H2O = an [RNA]-3'-cytidine-3'-phosphate + a 5'-hydroxy-ribonucleotide-3'-[RNA].</text>
        <dbReference type="EC" id="4.6.1.18"/>
    </reaction>
</comment>
<comment type="catalytic activity">
    <reaction>
        <text>an [RNA] containing uridine + H2O = an [RNA]-3'-uridine-3'-phosphate + a 5'-hydroxy-ribonucleotide-3'-[RNA].</text>
        <dbReference type="EC" id="4.6.1.18"/>
    </reaction>
</comment>
<comment type="subunit">
    <text evidence="1">Monomer. Interacts with and forms tight 1:1 complexes with RNH1. Dimerization of two such complexes may occur. Interaction with RNH1 inhibits this protein (By similarity).</text>
</comment>
<comment type="subcellular location">
    <subcellularLocation>
        <location evidence="1">Secreted</location>
    </subcellularLocation>
</comment>
<comment type="similarity">
    <text evidence="4">Belongs to the pancreatic ribonuclease family.</text>
</comment>
<dbReference type="EC" id="4.6.1.18"/>
<dbReference type="EMBL" id="AF449637">
    <property type="protein sequence ID" value="AAL87058.1"/>
    <property type="molecule type" value="Genomic_DNA"/>
</dbReference>
<dbReference type="SMR" id="Q8SQ08"/>
<dbReference type="GlyCosmos" id="Q8SQ08">
    <property type="glycosylation" value="2 sites, No reported glycans"/>
</dbReference>
<dbReference type="GO" id="GO:0005576">
    <property type="term" value="C:extracellular region"/>
    <property type="evidence" value="ECO:0007669"/>
    <property type="project" value="UniProtKB-SubCell"/>
</dbReference>
<dbReference type="GO" id="GO:0016829">
    <property type="term" value="F:lyase activity"/>
    <property type="evidence" value="ECO:0007669"/>
    <property type="project" value="UniProtKB-KW"/>
</dbReference>
<dbReference type="GO" id="GO:0003676">
    <property type="term" value="F:nucleic acid binding"/>
    <property type="evidence" value="ECO:0007669"/>
    <property type="project" value="InterPro"/>
</dbReference>
<dbReference type="GO" id="GO:0004522">
    <property type="term" value="F:ribonuclease A activity"/>
    <property type="evidence" value="ECO:0007669"/>
    <property type="project" value="UniProtKB-EC"/>
</dbReference>
<dbReference type="GO" id="GO:0050830">
    <property type="term" value="P:defense response to Gram-positive bacterium"/>
    <property type="evidence" value="ECO:0007669"/>
    <property type="project" value="TreeGrafter"/>
</dbReference>
<dbReference type="CDD" id="cd06265">
    <property type="entry name" value="RNase_A_canonical"/>
    <property type="match status" value="1"/>
</dbReference>
<dbReference type="FunFam" id="3.10.130.10:FF:000001">
    <property type="entry name" value="Ribonuclease pancreatic"/>
    <property type="match status" value="1"/>
</dbReference>
<dbReference type="Gene3D" id="3.10.130.10">
    <property type="entry name" value="Ribonuclease A-like domain"/>
    <property type="match status" value="1"/>
</dbReference>
<dbReference type="InterPro" id="IPR001427">
    <property type="entry name" value="RNaseA"/>
</dbReference>
<dbReference type="InterPro" id="IPR036816">
    <property type="entry name" value="RNaseA-like_dom_sf"/>
</dbReference>
<dbReference type="InterPro" id="IPR023411">
    <property type="entry name" value="RNaseA_AS"/>
</dbReference>
<dbReference type="InterPro" id="IPR023412">
    <property type="entry name" value="RNaseA_domain"/>
</dbReference>
<dbReference type="PANTHER" id="PTHR11437">
    <property type="entry name" value="RIBONUCLEASE"/>
    <property type="match status" value="1"/>
</dbReference>
<dbReference type="PANTHER" id="PTHR11437:SF24">
    <property type="entry name" value="RIBONUCLEASE PANCREATIC"/>
    <property type="match status" value="1"/>
</dbReference>
<dbReference type="Pfam" id="PF00074">
    <property type="entry name" value="RnaseA"/>
    <property type="match status" value="1"/>
</dbReference>
<dbReference type="PRINTS" id="PR00794">
    <property type="entry name" value="RIBONUCLEASE"/>
</dbReference>
<dbReference type="SMART" id="SM00092">
    <property type="entry name" value="RNAse_Pc"/>
    <property type="match status" value="1"/>
</dbReference>
<dbReference type="SUPFAM" id="SSF54076">
    <property type="entry name" value="RNase A-like"/>
    <property type="match status" value="1"/>
</dbReference>
<dbReference type="PROSITE" id="PS00127">
    <property type="entry name" value="RNASE_PANCREATIC"/>
    <property type="match status" value="1"/>
</dbReference>
<protein>
    <recommendedName>
        <fullName>Ribonuclease pancreatic</fullName>
        <ecNumber>4.6.1.18</ecNumber>
    </recommendedName>
    <alternativeName>
        <fullName>RNase 1</fullName>
    </alternativeName>
    <alternativeName>
        <fullName>RNase A</fullName>
    </alternativeName>
</protein>
<sequence>MALEKSLALLPLLVLVLLVLGWVQPSLGRESRAKKFQRQHMDSDGSPSSNPTYCNDMMRRRNMTQGRCKPVNTFVHEPLVDVQDVCFQEKVTCKNGQANCYKSSSSMHITDCRLTNGSRYPNCAYRTSQKERHIIVACEGNPYVPVHFDASVEDST</sequence>
<feature type="signal peptide" evidence="1">
    <location>
        <begin position="1"/>
        <end position="28"/>
    </location>
</feature>
<feature type="chain" id="PRO_0000030943" description="Ribonuclease pancreatic">
    <location>
        <begin position="29"/>
        <end position="156"/>
    </location>
</feature>
<feature type="region of interest" description="Disordered" evidence="3">
    <location>
        <begin position="33"/>
        <end position="52"/>
    </location>
</feature>
<feature type="compositionally biased region" description="Basic and acidic residues" evidence="3">
    <location>
        <begin position="33"/>
        <end position="43"/>
    </location>
</feature>
<feature type="active site" description="Proton acceptor" evidence="1">
    <location>
        <position position="40"/>
    </location>
</feature>
<feature type="active site" description="Proton donor" evidence="1">
    <location>
        <position position="147"/>
    </location>
</feature>
<feature type="binding site" evidence="1">
    <location>
        <position position="35"/>
    </location>
    <ligand>
        <name>substrate</name>
    </ligand>
</feature>
<feature type="binding site" evidence="1">
    <location>
        <position position="38"/>
    </location>
    <ligand>
        <name>substrate</name>
    </ligand>
</feature>
<feature type="binding site" evidence="1">
    <location>
        <begin position="69"/>
        <end position="73"/>
    </location>
    <ligand>
        <name>substrate</name>
    </ligand>
</feature>
<feature type="binding site" evidence="1">
    <location>
        <position position="94"/>
    </location>
    <ligand>
        <name>substrate</name>
    </ligand>
</feature>
<feature type="binding site" evidence="1">
    <location>
        <position position="113"/>
    </location>
    <ligand>
        <name>substrate</name>
    </ligand>
</feature>
<feature type="glycosylation site" description="N-linked (GlcNAc...) asparagine" evidence="2">
    <location>
        <position position="62"/>
    </location>
</feature>
<feature type="glycosylation site" description="N-linked (GlcNAc...) asparagine" evidence="2">
    <location>
        <position position="116"/>
    </location>
</feature>
<feature type="disulfide bond" evidence="1">
    <location>
        <begin position="54"/>
        <end position="112"/>
    </location>
</feature>
<feature type="disulfide bond" evidence="1">
    <location>
        <begin position="68"/>
        <end position="123"/>
    </location>
</feature>
<feature type="disulfide bond" evidence="1">
    <location>
        <begin position="86"/>
        <end position="138"/>
    </location>
</feature>
<feature type="disulfide bond" evidence="1">
    <location>
        <begin position="93"/>
        <end position="100"/>
    </location>
</feature>
<gene>
    <name type="primary">RNASE1</name>
</gene>
<accession>Q8SQ08</accession>